<protein>
    <recommendedName>
        <fullName>EMBRYO SURROUNDING FACTOR 1-like protein 6</fullName>
    </recommendedName>
</protein>
<reference key="1">
    <citation type="journal article" date="1999" name="Nature">
        <title>Sequence and analysis of chromosome 2 of the plant Arabidopsis thaliana.</title>
        <authorList>
            <person name="Lin X."/>
            <person name="Kaul S."/>
            <person name="Rounsley S.D."/>
            <person name="Shea T.P."/>
            <person name="Benito M.-I."/>
            <person name="Town C.D."/>
            <person name="Fujii C.Y."/>
            <person name="Mason T.M."/>
            <person name="Bowman C.L."/>
            <person name="Barnstead M.E."/>
            <person name="Feldblyum T.V."/>
            <person name="Buell C.R."/>
            <person name="Ketchum K.A."/>
            <person name="Lee J.J."/>
            <person name="Ronning C.M."/>
            <person name="Koo H.L."/>
            <person name="Moffat K.S."/>
            <person name="Cronin L.A."/>
            <person name="Shen M."/>
            <person name="Pai G."/>
            <person name="Van Aken S."/>
            <person name="Umayam L."/>
            <person name="Tallon L.J."/>
            <person name="Gill J.E."/>
            <person name="Adams M.D."/>
            <person name="Carrera A.J."/>
            <person name="Creasy T.H."/>
            <person name="Goodman H.M."/>
            <person name="Somerville C.R."/>
            <person name="Copenhaver G.P."/>
            <person name="Preuss D."/>
            <person name="Nierman W.C."/>
            <person name="White O."/>
            <person name="Eisen J.A."/>
            <person name="Salzberg S.L."/>
            <person name="Fraser C.M."/>
            <person name="Venter J.C."/>
        </authorList>
    </citation>
    <scope>NUCLEOTIDE SEQUENCE [LARGE SCALE GENOMIC DNA]</scope>
    <source>
        <strain>cv. Columbia</strain>
    </source>
</reference>
<reference key="2">
    <citation type="journal article" date="2017" name="Plant J.">
        <title>Araport11: a complete reannotation of the Arabidopsis thaliana reference genome.</title>
        <authorList>
            <person name="Cheng C.Y."/>
            <person name="Krishnakumar V."/>
            <person name="Chan A.P."/>
            <person name="Thibaud-Nissen F."/>
            <person name="Schobel S."/>
            <person name="Town C.D."/>
        </authorList>
    </citation>
    <scope>GENOME REANNOTATION</scope>
    <source>
        <strain>cv. Columbia</strain>
    </source>
</reference>
<reference key="3">
    <citation type="submission" date="2004-05" db="EMBL/GenBank/DDBJ databases">
        <title>Arabidopsis ORF clones.</title>
        <authorList>
            <person name="Cheuk R."/>
            <person name="Chen H."/>
            <person name="Kim C.J."/>
            <person name="Shinn P."/>
            <person name="Ecker J.R."/>
        </authorList>
    </citation>
    <scope>NUCLEOTIDE SEQUENCE [LARGE SCALE MRNA] OF 1-64</scope>
</reference>
<reference key="4">
    <citation type="journal article" date="2014" name="Science">
        <title>Central cell-derived peptides regulate early embryo patterning in flowering plants.</title>
        <authorList>
            <person name="Costa L.M."/>
            <person name="Marshall E."/>
            <person name="Tesfaye M."/>
            <person name="Silverstein K.A."/>
            <person name="Mori M."/>
            <person name="Umetsu Y."/>
            <person name="Otterbach S.L."/>
            <person name="Papareddy R."/>
            <person name="Dickinson H.G."/>
            <person name="Boutiller K."/>
            <person name="VandenBosch K.A."/>
            <person name="Ohki S."/>
            <person name="Gutierrez-Marcos J.F."/>
        </authorList>
    </citation>
    <scope>IDENTIFICATION</scope>
</reference>
<name>ESFL6_ARATH</name>
<evidence type="ECO:0000250" key="1"/>
<evidence type="ECO:0000255" key="2"/>
<evidence type="ECO:0000305" key="3"/>
<keyword id="KW-1015">Disulfide bond</keyword>
<keyword id="KW-1185">Reference proteome</keyword>
<keyword id="KW-0732">Signal</keyword>
<feature type="signal peptide" evidence="2">
    <location>
        <begin position="1"/>
        <end position="25"/>
    </location>
</feature>
<feature type="chain" id="PRO_0000430067" description="EMBRYO SURROUNDING FACTOR 1-like protein 6">
    <location>
        <begin position="26"/>
        <end position="77"/>
    </location>
</feature>
<feature type="disulfide bond" evidence="1">
    <location>
        <begin position="38"/>
        <end position="53"/>
    </location>
</feature>
<feature type="disulfide bond" evidence="1">
    <location>
        <begin position="43"/>
        <end position="72"/>
    </location>
</feature>
<feature type="disulfide bond" evidence="1">
    <location>
        <begin position="51"/>
        <end position="68"/>
    </location>
</feature>
<feature type="disulfide bond" evidence="1">
    <location>
        <begin position="54"/>
        <end position="61"/>
    </location>
</feature>
<proteinExistence type="inferred from homology"/>
<gene>
    <name type="primary">ESFL6</name>
    <name type="ordered locus">At2g29790</name>
    <name type="ORF">T27A16.11</name>
</gene>
<accession>O82377</accession>
<organism>
    <name type="scientific">Arabidopsis thaliana</name>
    <name type="common">Mouse-ear cress</name>
    <dbReference type="NCBI Taxonomy" id="3702"/>
    <lineage>
        <taxon>Eukaryota</taxon>
        <taxon>Viridiplantae</taxon>
        <taxon>Streptophyta</taxon>
        <taxon>Embryophyta</taxon>
        <taxon>Tracheophyta</taxon>
        <taxon>Spermatophyta</taxon>
        <taxon>Magnoliopsida</taxon>
        <taxon>eudicotyledons</taxon>
        <taxon>Gunneridae</taxon>
        <taxon>Pentapetalae</taxon>
        <taxon>rosids</taxon>
        <taxon>malvids</taxon>
        <taxon>Brassicales</taxon>
        <taxon>Brassicaceae</taxon>
        <taxon>Camelineae</taxon>
        <taxon>Arabidopsis</taxon>
    </lineage>
</organism>
<dbReference type="EMBL" id="AC005496">
    <property type="protein sequence ID" value="AAC35222.1"/>
    <property type="status" value="ALT_SEQ"/>
    <property type="molecule type" value="Genomic_DNA"/>
</dbReference>
<dbReference type="EMBL" id="CP002685">
    <property type="status" value="NOT_ANNOTATED_CDS"/>
    <property type="molecule type" value="Genomic_DNA"/>
</dbReference>
<dbReference type="EMBL" id="BT012584">
    <property type="protein sequence ID" value="AAT06403.1"/>
    <property type="status" value="ALT_SEQ"/>
    <property type="molecule type" value="mRNA"/>
</dbReference>
<dbReference type="PIR" id="F84700">
    <property type="entry name" value="F84700"/>
</dbReference>
<dbReference type="STRING" id="3702.O82377"/>
<dbReference type="PeptideAtlas" id="O82377"/>
<dbReference type="ProteomicsDB" id="222293"/>
<dbReference type="Araport" id="AT2G29790"/>
<dbReference type="TAIR" id="AT2G29790">
    <property type="gene designation" value="PCP-BBETA"/>
</dbReference>
<dbReference type="HOGENOM" id="CLU_2593033_0_0_1"/>
<dbReference type="InParanoid" id="O82377"/>
<dbReference type="PRO" id="PR:O82377"/>
<dbReference type="Proteomes" id="UP000006548">
    <property type="component" value="Chromosome 2"/>
</dbReference>
<dbReference type="ExpressionAtlas" id="O82377">
    <property type="expression patterns" value="baseline and differential"/>
</dbReference>
<dbReference type="GO" id="GO:0140301">
    <property type="term" value="P:pollen-stigma interaction"/>
    <property type="evidence" value="ECO:0000316"/>
    <property type="project" value="TAIR"/>
</dbReference>
<comment type="similarity">
    <text evidence="3">Belongs to the MEG family.</text>
</comment>
<comment type="sequence caution" evidence="3">
    <conflict type="erroneous gene model prediction">
        <sequence resource="EMBL-CDS" id="AAC35222"/>
    </conflict>
</comment>
<comment type="sequence caution" evidence="3">
    <conflict type="miscellaneous discrepancy">
        <sequence resource="EMBL-CDS" id="AAT06403"/>
    </conflict>
    <text>Intron retention.</text>
</comment>
<sequence length="77" mass="8677">MSPSHFAILFIIVISLVPLHGYANGQGFDANKLGSSVCHLGKCPKHREEVCYCCFNDRSRCYRSLYKCVAVCNRLVH</sequence>